<proteinExistence type="inferred from homology"/>
<sequence>MTQKTILNDTHRALGAKMVDFGGWDMPIHYGSQLDEHHQVRRDAGMFDVSHMTVVDLHGARVREFLRYLLANSVDKLKVSGKALYTCMLNPQGGVIDDLIVYYMTEDFFRLVVNAATREKDLQWIGEQAARFDVRVEERSDFAMIAVQGPGARTKVIDLLDPADTAAASKLGRFAALQTRSRDGIDLFLARTGYTGEDGFEIVLPQEAAVAFWNALLAQGVKPAGLGARDTLRLEAGMNLYGQDMDDGVTPYEAGLAWTIALDEGRDFIGRSVLEYQKAQGAPRQLIGVVMDEKGVLRHGQTVLTASGEGEILSGTFSPTLGKAIAFARVPAGSIEQLRVDIRGKQVPLRAVKFPFVRDGQAQPGVLGD</sequence>
<dbReference type="EC" id="2.1.2.10" evidence="1"/>
<dbReference type="EMBL" id="AM039952">
    <property type="protein sequence ID" value="CAJ24927.1"/>
    <property type="molecule type" value="Genomic_DNA"/>
</dbReference>
<dbReference type="RefSeq" id="WP_011348214.1">
    <property type="nucleotide sequence ID" value="NZ_CP017190.1"/>
</dbReference>
<dbReference type="SMR" id="Q3BQN6"/>
<dbReference type="STRING" id="456327.BJD11_06825"/>
<dbReference type="KEGG" id="xcv:XCV3196"/>
<dbReference type="eggNOG" id="COG0404">
    <property type="taxonomic scope" value="Bacteria"/>
</dbReference>
<dbReference type="HOGENOM" id="CLU_007884_10_2_6"/>
<dbReference type="Proteomes" id="UP000007069">
    <property type="component" value="Chromosome"/>
</dbReference>
<dbReference type="GO" id="GO:0005829">
    <property type="term" value="C:cytosol"/>
    <property type="evidence" value="ECO:0007669"/>
    <property type="project" value="TreeGrafter"/>
</dbReference>
<dbReference type="GO" id="GO:0005960">
    <property type="term" value="C:glycine cleavage complex"/>
    <property type="evidence" value="ECO:0007669"/>
    <property type="project" value="InterPro"/>
</dbReference>
<dbReference type="GO" id="GO:0004047">
    <property type="term" value="F:aminomethyltransferase activity"/>
    <property type="evidence" value="ECO:0007669"/>
    <property type="project" value="UniProtKB-UniRule"/>
</dbReference>
<dbReference type="GO" id="GO:0008483">
    <property type="term" value="F:transaminase activity"/>
    <property type="evidence" value="ECO:0007669"/>
    <property type="project" value="UniProtKB-KW"/>
</dbReference>
<dbReference type="GO" id="GO:0019464">
    <property type="term" value="P:glycine decarboxylation via glycine cleavage system"/>
    <property type="evidence" value="ECO:0007669"/>
    <property type="project" value="UniProtKB-UniRule"/>
</dbReference>
<dbReference type="FunFam" id="2.40.30.110:FF:000001">
    <property type="entry name" value="Aminomethyltransferase"/>
    <property type="match status" value="1"/>
</dbReference>
<dbReference type="FunFam" id="3.30.70.1400:FF:000001">
    <property type="entry name" value="Aminomethyltransferase"/>
    <property type="match status" value="1"/>
</dbReference>
<dbReference type="FunFam" id="4.10.1250.10:FF:000001">
    <property type="entry name" value="Aminomethyltransferase"/>
    <property type="match status" value="1"/>
</dbReference>
<dbReference type="Gene3D" id="2.40.30.110">
    <property type="entry name" value="Aminomethyltransferase beta-barrel domains"/>
    <property type="match status" value="1"/>
</dbReference>
<dbReference type="Gene3D" id="3.30.70.1400">
    <property type="entry name" value="Aminomethyltransferase beta-barrel domains"/>
    <property type="match status" value="1"/>
</dbReference>
<dbReference type="Gene3D" id="4.10.1250.10">
    <property type="entry name" value="Aminomethyltransferase fragment"/>
    <property type="match status" value="1"/>
</dbReference>
<dbReference type="Gene3D" id="3.30.1360.120">
    <property type="entry name" value="Probable tRNA modification gtpase trme, domain 1"/>
    <property type="match status" value="1"/>
</dbReference>
<dbReference type="HAMAP" id="MF_00259">
    <property type="entry name" value="GcvT"/>
    <property type="match status" value="1"/>
</dbReference>
<dbReference type="InterPro" id="IPR006223">
    <property type="entry name" value="GCS_T"/>
</dbReference>
<dbReference type="InterPro" id="IPR022903">
    <property type="entry name" value="GCS_T_bac"/>
</dbReference>
<dbReference type="InterPro" id="IPR013977">
    <property type="entry name" value="GCST_C"/>
</dbReference>
<dbReference type="InterPro" id="IPR006222">
    <property type="entry name" value="GCV_T_N"/>
</dbReference>
<dbReference type="InterPro" id="IPR028896">
    <property type="entry name" value="GcvT/YgfZ/DmdA"/>
</dbReference>
<dbReference type="InterPro" id="IPR029043">
    <property type="entry name" value="GcvT/YgfZ_C"/>
</dbReference>
<dbReference type="InterPro" id="IPR027266">
    <property type="entry name" value="TrmE/GcvT_dom1"/>
</dbReference>
<dbReference type="NCBIfam" id="TIGR00528">
    <property type="entry name" value="gcvT"/>
    <property type="match status" value="1"/>
</dbReference>
<dbReference type="NCBIfam" id="NF001567">
    <property type="entry name" value="PRK00389.1"/>
    <property type="match status" value="1"/>
</dbReference>
<dbReference type="PANTHER" id="PTHR43757">
    <property type="entry name" value="AMINOMETHYLTRANSFERASE"/>
    <property type="match status" value="1"/>
</dbReference>
<dbReference type="PANTHER" id="PTHR43757:SF2">
    <property type="entry name" value="AMINOMETHYLTRANSFERASE, MITOCHONDRIAL"/>
    <property type="match status" value="1"/>
</dbReference>
<dbReference type="Pfam" id="PF01571">
    <property type="entry name" value="GCV_T"/>
    <property type="match status" value="1"/>
</dbReference>
<dbReference type="Pfam" id="PF08669">
    <property type="entry name" value="GCV_T_C"/>
    <property type="match status" value="1"/>
</dbReference>
<dbReference type="PIRSF" id="PIRSF006487">
    <property type="entry name" value="GcvT"/>
    <property type="match status" value="1"/>
</dbReference>
<dbReference type="SUPFAM" id="SSF101790">
    <property type="entry name" value="Aminomethyltransferase beta-barrel domain"/>
    <property type="match status" value="1"/>
</dbReference>
<dbReference type="SUPFAM" id="SSF103025">
    <property type="entry name" value="Folate-binding domain"/>
    <property type="match status" value="1"/>
</dbReference>
<gene>
    <name evidence="1" type="primary">gcvT</name>
    <name type="ordered locus">XCV3196</name>
</gene>
<accession>Q3BQN6</accession>
<keyword id="KW-0032">Aminotransferase</keyword>
<keyword id="KW-0808">Transferase</keyword>
<feature type="chain" id="PRO_1000047726" description="Aminomethyltransferase">
    <location>
        <begin position="1"/>
        <end position="369"/>
    </location>
</feature>
<protein>
    <recommendedName>
        <fullName evidence="1">Aminomethyltransferase</fullName>
        <ecNumber evidence="1">2.1.2.10</ecNumber>
    </recommendedName>
    <alternativeName>
        <fullName evidence="1">Glycine cleavage system T protein</fullName>
    </alternativeName>
</protein>
<name>GCST_XANE5</name>
<organism>
    <name type="scientific">Xanthomonas euvesicatoria pv. vesicatoria (strain 85-10)</name>
    <name type="common">Xanthomonas campestris pv. vesicatoria</name>
    <dbReference type="NCBI Taxonomy" id="316273"/>
    <lineage>
        <taxon>Bacteria</taxon>
        <taxon>Pseudomonadati</taxon>
        <taxon>Pseudomonadota</taxon>
        <taxon>Gammaproteobacteria</taxon>
        <taxon>Lysobacterales</taxon>
        <taxon>Lysobacteraceae</taxon>
        <taxon>Xanthomonas</taxon>
    </lineage>
</organism>
<reference key="1">
    <citation type="journal article" date="2005" name="J. Bacteriol.">
        <title>Insights into genome plasticity and pathogenicity of the plant pathogenic Bacterium Xanthomonas campestris pv. vesicatoria revealed by the complete genome sequence.</title>
        <authorList>
            <person name="Thieme F."/>
            <person name="Koebnik R."/>
            <person name="Bekel T."/>
            <person name="Berger C."/>
            <person name="Boch J."/>
            <person name="Buettner D."/>
            <person name="Caldana C."/>
            <person name="Gaigalat L."/>
            <person name="Goesmann A."/>
            <person name="Kay S."/>
            <person name="Kirchner O."/>
            <person name="Lanz C."/>
            <person name="Linke B."/>
            <person name="McHardy A.C."/>
            <person name="Meyer F."/>
            <person name="Mittenhuber G."/>
            <person name="Nies D.H."/>
            <person name="Niesbach-Kloesgen U."/>
            <person name="Patschkowski T."/>
            <person name="Rueckert C."/>
            <person name="Rupp O."/>
            <person name="Schneiker S."/>
            <person name="Schuster S.C."/>
            <person name="Vorhoelter F.J."/>
            <person name="Weber E."/>
            <person name="Puehler A."/>
            <person name="Bonas U."/>
            <person name="Bartels D."/>
            <person name="Kaiser O."/>
        </authorList>
    </citation>
    <scope>NUCLEOTIDE SEQUENCE [LARGE SCALE GENOMIC DNA]</scope>
    <source>
        <strain>85-10</strain>
    </source>
</reference>
<evidence type="ECO:0000255" key="1">
    <source>
        <dbReference type="HAMAP-Rule" id="MF_00259"/>
    </source>
</evidence>
<comment type="function">
    <text evidence="1">The glycine cleavage system catalyzes the degradation of glycine.</text>
</comment>
<comment type="catalytic activity">
    <reaction evidence="1">
        <text>N(6)-[(R)-S(8)-aminomethyldihydrolipoyl]-L-lysyl-[protein] + (6S)-5,6,7,8-tetrahydrofolate = N(6)-[(R)-dihydrolipoyl]-L-lysyl-[protein] + (6R)-5,10-methylene-5,6,7,8-tetrahydrofolate + NH4(+)</text>
        <dbReference type="Rhea" id="RHEA:16945"/>
        <dbReference type="Rhea" id="RHEA-COMP:10475"/>
        <dbReference type="Rhea" id="RHEA-COMP:10492"/>
        <dbReference type="ChEBI" id="CHEBI:15636"/>
        <dbReference type="ChEBI" id="CHEBI:28938"/>
        <dbReference type="ChEBI" id="CHEBI:57453"/>
        <dbReference type="ChEBI" id="CHEBI:83100"/>
        <dbReference type="ChEBI" id="CHEBI:83143"/>
        <dbReference type="EC" id="2.1.2.10"/>
    </reaction>
</comment>
<comment type="subunit">
    <text evidence="1">The glycine cleavage system is composed of four proteins: P, T, L and H.</text>
</comment>
<comment type="similarity">
    <text evidence="1">Belongs to the GcvT family.</text>
</comment>